<comment type="function">
    <text evidence="1">May play a role in cell-cell recognition and signaling.</text>
</comment>
<comment type="subcellular location">
    <subcellularLocation>
        <location evidence="1">Membrane</location>
        <topology evidence="1">Single-pass type I membrane protein</topology>
    </subcellularLocation>
</comment>
<comment type="PTM">
    <text evidence="1">Palmitoylated.</text>
</comment>
<gene>
    <name type="primary">Gpa33</name>
</gene>
<accession>Q9JKA5</accession>
<accession>Q922D5</accession>
<proteinExistence type="evidence at transcript level"/>
<name>GPA33_MOUSE</name>
<protein>
    <recommendedName>
        <fullName>Cell surface A33 antigen</fullName>
    </recommendedName>
    <alternativeName>
        <fullName>Glycoprotein A33</fullName>
        <shortName>mA33</shortName>
    </alternativeName>
</protein>
<feature type="signal peptide" evidence="2">
    <location>
        <begin position="1"/>
        <end position="21"/>
    </location>
</feature>
<feature type="chain" id="PRO_0000014771" description="Cell surface A33 antigen">
    <location>
        <begin position="22"/>
        <end position="319"/>
    </location>
</feature>
<feature type="topological domain" description="Extracellular" evidence="2">
    <location>
        <begin position="22"/>
        <end position="235"/>
    </location>
</feature>
<feature type="transmembrane region" description="Helical" evidence="2">
    <location>
        <begin position="236"/>
        <end position="256"/>
    </location>
</feature>
<feature type="topological domain" description="Cytoplasmic" evidence="2">
    <location>
        <begin position="257"/>
        <end position="319"/>
    </location>
</feature>
<feature type="domain" description="Ig-like V-type">
    <location>
        <begin position="22"/>
        <end position="134"/>
    </location>
</feature>
<feature type="domain" description="Ig-like C2-type">
    <location>
        <begin position="140"/>
        <end position="227"/>
    </location>
</feature>
<feature type="region of interest" description="Disordered" evidence="4">
    <location>
        <begin position="267"/>
        <end position="319"/>
    </location>
</feature>
<feature type="compositionally biased region" description="Basic and acidic residues" evidence="4">
    <location>
        <begin position="267"/>
        <end position="276"/>
    </location>
</feature>
<feature type="compositionally biased region" description="Basic and acidic residues" evidence="4">
    <location>
        <begin position="284"/>
        <end position="308"/>
    </location>
</feature>
<feature type="compositionally biased region" description="Polar residues" evidence="4">
    <location>
        <begin position="309"/>
        <end position="319"/>
    </location>
</feature>
<feature type="glycosylation site" description="N-linked (GlcNAc...) asparagine" evidence="2">
    <location>
        <position position="99"/>
    </location>
</feature>
<feature type="glycosylation site" description="N-linked (GlcNAc...) asparagine" evidence="2">
    <location>
        <position position="112"/>
    </location>
</feature>
<feature type="glycosylation site" description="N-linked (GlcNAc...) asparagine" evidence="2">
    <location>
        <position position="200"/>
    </location>
</feature>
<feature type="glycosylation site" description="N-linked (GlcNAc...) asparagine" evidence="2">
    <location>
        <position position="223"/>
    </location>
</feature>
<feature type="disulfide bond" evidence="3">
    <location>
        <begin position="43"/>
        <end position="117"/>
    </location>
</feature>
<feature type="disulfide bond" evidence="3">
    <location>
        <begin position="146"/>
        <end position="222"/>
    </location>
</feature>
<feature type="disulfide bond" evidence="3">
    <location>
        <begin position="162"/>
        <end position="211"/>
    </location>
</feature>
<feature type="sequence conflict" description="In Ref. 1; AAF65818." evidence="5" ref="1">
    <original>L</original>
    <variation>F</variation>
    <location>
        <position position="12"/>
    </location>
</feature>
<feature type="sequence conflict" description="In Ref. 1; AAF65818." evidence="5" ref="1">
    <original>G</original>
    <variation>S</variation>
    <location>
        <position position="244"/>
    </location>
</feature>
<sequence>MLGKAGSVVWMLCAIWVAADALTVETTQDILRAARGRSVTLPCTYNTYVSDREGFIQWDKLLRSQTERVVTWNFVTKKYIYGNRYENRVRVSNDAELSNASITIDQLTMDDNGTYECSVSLMSDQDVNAKSRVRLLVLVPPSKPDCSIQGEMVIGNNIQLTCHSAEGSPSPQYSWKSYNAQNQQRPLTQPVSGEPLLLKNISTETAGYYICTSSNDVGIESCNITVAPRPPSMNIALYAGIAGGVFVALIIIGVIVYCCCCREKDDKDQDREDARPNRAAYQVPKKEQKEISRGREDEDDHRHEDRWSSGRSTPDQPFQ</sequence>
<keyword id="KW-1015">Disulfide bond</keyword>
<keyword id="KW-0325">Glycoprotein</keyword>
<keyword id="KW-0393">Immunoglobulin domain</keyword>
<keyword id="KW-0449">Lipoprotein</keyword>
<keyword id="KW-0472">Membrane</keyword>
<keyword id="KW-0564">Palmitate</keyword>
<keyword id="KW-1185">Reference proteome</keyword>
<keyword id="KW-0732">Signal</keyword>
<keyword id="KW-0812">Transmembrane</keyword>
<keyword id="KW-1133">Transmembrane helix</keyword>
<evidence type="ECO:0000250" key="1"/>
<evidence type="ECO:0000255" key="2"/>
<evidence type="ECO:0000255" key="3">
    <source>
        <dbReference type="PROSITE-ProRule" id="PRU00114"/>
    </source>
</evidence>
<evidence type="ECO:0000256" key="4">
    <source>
        <dbReference type="SAM" id="MobiDB-lite"/>
    </source>
</evidence>
<evidence type="ECO:0000305" key="5"/>
<organism>
    <name type="scientific">Mus musculus</name>
    <name type="common">Mouse</name>
    <dbReference type="NCBI Taxonomy" id="10090"/>
    <lineage>
        <taxon>Eukaryota</taxon>
        <taxon>Metazoa</taxon>
        <taxon>Chordata</taxon>
        <taxon>Craniata</taxon>
        <taxon>Vertebrata</taxon>
        <taxon>Euteleostomi</taxon>
        <taxon>Mammalia</taxon>
        <taxon>Eutheria</taxon>
        <taxon>Euarchontoglires</taxon>
        <taxon>Glires</taxon>
        <taxon>Rodentia</taxon>
        <taxon>Myomorpha</taxon>
        <taxon>Muroidea</taxon>
        <taxon>Muridae</taxon>
        <taxon>Murinae</taxon>
        <taxon>Mus</taxon>
        <taxon>Mus</taxon>
    </lineage>
</organism>
<dbReference type="EMBL" id="AF247659">
    <property type="protein sequence ID" value="AAF65818.1"/>
    <property type="molecule type" value="mRNA"/>
</dbReference>
<dbReference type="EMBL" id="BC008528">
    <property type="protein sequence ID" value="AAH08528.1"/>
    <property type="molecule type" value="mRNA"/>
</dbReference>
<dbReference type="CCDS" id="CCDS15447.1"/>
<dbReference type="RefSeq" id="NP_067623.1">
    <property type="nucleotide sequence ID" value="NM_021610.1"/>
</dbReference>
<dbReference type="SMR" id="Q9JKA5"/>
<dbReference type="FunCoup" id="Q9JKA5">
    <property type="interactions" value="896"/>
</dbReference>
<dbReference type="STRING" id="10090.ENSMUSP00000060147"/>
<dbReference type="GlyCosmos" id="Q9JKA5">
    <property type="glycosylation" value="4 sites, No reported glycans"/>
</dbReference>
<dbReference type="GlyGen" id="Q9JKA5">
    <property type="glycosylation" value="4 sites"/>
</dbReference>
<dbReference type="PhosphoSitePlus" id="Q9JKA5"/>
<dbReference type="PaxDb" id="10090-ENSMUSP00000060147"/>
<dbReference type="PeptideAtlas" id="Q9JKA5"/>
<dbReference type="ProteomicsDB" id="267754"/>
<dbReference type="ABCD" id="Q9JKA5">
    <property type="antibodies" value="32 sequenced antibodies"/>
</dbReference>
<dbReference type="GeneID" id="59290"/>
<dbReference type="KEGG" id="mmu:59290"/>
<dbReference type="UCSC" id="uc007dkj.1">
    <property type="organism name" value="mouse"/>
</dbReference>
<dbReference type="AGR" id="MGI:1891703"/>
<dbReference type="CTD" id="10223"/>
<dbReference type="MGI" id="MGI:1891703">
    <property type="gene designation" value="Gpa33"/>
</dbReference>
<dbReference type="eggNOG" id="ENOG502QR0Y">
    <property type="taxonomic scope" value="Eukaryota"/>
</dbReference>
<dbReference type="InParanoid" id="Q9JKA5"/>
<dbReference type="OrthoDB" id="8825892at2759"/>
<dbReference type="PhylomeDB" id="Q9JKA5"/>
<dbReference type="TreeFam" id="TF330875"/>
<dbReference type="BioGRID-ORCS" id="59290">
    <property type="hits" value="0 hits in 76 CRISPR screens"/>
</dbReference>
<dbReference type="PRO" id="PR:Q9JKA5"/>
<dbReference type="Proteomes" id="UP000000589">
    <property type="component" value="Unplaced"/>
</dbReference>
<dbReference type="RNAct" id="Q9JKA5">
    <property type="molecule type" value="protein"/>
</dbReference>
<dbReference type="GO" id="GO:0005886">
    <property type="term" value="C:plasma membrane"/>
    <property type="evidence" value="ECO:0000314"/>
    <property type="project" value="MGI"/>
</dbReference>
<dbReference type="FunFam" id="2.60.40.10:FF:001969">
    <property type="entry name" value="Cell surface A33 antigen"/>
    <property type="match status" value="1"/>
</dbReference>
<dbReference type="FunFam" id="2.60.40.10:FF:000095">
    <property type="entry name" value="immunoglobulin superfamily member 11 isoform X1"/>
    <property type="match status" value="1"/>
</dbReference>
<dbReference type="Gene3D" id="2.60.40.10">
    <property type="entry name" value="Immunoglobulins"/>
    <property type="match status" value="2"/>
</dbReference>
<dbReference type="InterPro" id="IPR042474">
    <property type="entry name" value="A33"/>
</dbReference>
<dbReference type="InterPro" id="IPR007110">
    <property type="entry name" value="Ig-like_dom"/>
</dbReference>
<dbReference type="InterPro" id="IPR036179">
    <property type="entry name" value="Ig-like_dom_sf"/>
</dbReference>
<dbReference type="InterPro" id="IPR013783">
    <property type="entry name" value="Ig-like_fold"/>
</dbReference>
<dbReference type="InterPro" id="IPR003599">
    <property type="entry name" value="Ig_sub"/>
</dbReference>
<dbReference type="InterPro" id="IPR003598">
    <property type="entry name" value="Ig_sub2"/>
</dbReference>
<dbReference type="InterPro" id="IPR013106">
    <property type="entry name" value="Ig_V-set"/>
</dbReference>
<dbReference type="InterPro" id="IPR013151">
    <property type="entry name" value="Immunoglobulin_dom"/>
</dbReference>
<dbReference type="PANTHER" id="PTHR44969">
    <property type="entry name" value="CELL SURFACE A33 ANTIGEN"/>
    <property type="match status" value="1"/>
</dbReference>
<dbReference type="PANTHER" id="PTHR44969:SF1">
    <property type="entry name" value="CELL SURFACE A33 ANTIGEN"/>
    <property type="match status" value="1"/>
</dbReference>
<dbReference type="Pfam" id="PF00047">
    <property type="entry name" value="ig"/>
    <property type="match status" value="1"/>
</dbReference>
<dbReference type="Pfam" id="PF07686">
    <property type="entry name" value="V-set"/>
    <property type="match status" value="1"/>
</dbReference>
<dbReference type="SMART" id="SM00409">
    <property type="entry name" value="IG"/>
    <property type="match status" value="2"/>
</dbReference>
<dbReference type="SMART" id="SM00408">
    <property type="entry name" value="IGc2"/>
    <property type="match status" value="2"/>
</dbReference>
<dbReference type="SMART" id="SM00406">
    <property type="entry name" value="IGv"/>
    <property type="match status" value="1"/>
</dbReference>
<dbReference type="SUPFAM" id="SSF48726">
    <property type="entry name" value="Immunoglobulin"/>
    <property type="match status" value="2"/>
</dbReference>
<dbReference type="PROSITE" id="PS50835">
    <property type="entry name" value="IG_LIKE"/>
    <property type="match status" value="2"/>
</dbReference>
<reference key="1">
    <citation type="journal article" date="2000" name="Am. J. Physiol.">
        <title>Characterization of mouse A33 antigen; a definitive marker for basolateral surfaces of intestinal epithelial cells.</title>
        <authorList>
            <person name="Johnstone C.N."/>
            <person name="Tebbutt N.C."/>
            <person name="Abud H.E."/>
            <person name="White S.J."/>
            <person name="Stenvers K.L."/>
            <person name="Hall N.E."/>
            <person name="Cody S.H."/>
            <person name="Whitehead R.H."/>
            <person name="Catimel B."/>
            <person name="Nice E.C."/>
            <person name="Burgess A.W."/>
            <person name="Heath J.K."/>
        </authorList>
    </citation>
    <scope>NUCLEOTIDE SEQUENCE [MRNA]</scope>
    <source>
        <tissue>Colon epithelium</tissue>
        <tissue>Small intestine mucosa</tissue>
    </source>
</reference>
<reference key="2">
    <citation type="journal article" date="2004" name="Genome Res.">
        <title>The status, quality, and expansion of the NIH full-length cDNA project: the Mammalian Gene Collection (MGC).</title>
        <authorList>
            <consortium name="The MGC Project Team"/>
        </authorList>
    </citation>
    <scope>NUCLEOTIDE SEQUENCE [LARGE SCALE MRNA]</scope>
</reference>